<proteinExistence type="evidence at protein level"/>
<dbReference type="EMBL" id="AL035460">
    <property type="status" value="NOT_ANNOTATED_CDS"/>
    <property type="molecule type" value="Genomic_DNA"/>
</dbReference>
<dbReference type="EMBL" id="AB037863">
    <property type="protein sequence ID" value="BAA92680.1"/>
    <property type="molecule type" value="mRNA"/>
</dbReference>
<dbReference type="CCDS" id="CCDS93003.1">
    <molecule id="Q9BQW3-2"/>
</dbReference>
<dbReference type="RefSeq" id="NP_001103984.1">
    <property type="nucleotide sequence ID" value="NM_001110514.1"/>
</dbReference>
<dbReference type="RefSeq" id="NP_001382096.1">
    <molecule id="Q9BQW3-2"/>
    <property type="nucleotide sequence ID" value="NM_001395167.1"/>
</dbReference>
<dbReference type="SMR" id="Q9BQW3"/>
<dbReference type="BioGRID" id="121644">
    <property type="interactions" value="4"/>
</dbReference>
<dbReference type="FunCoup" id="Q9BQW3">
    <property type="interactions" value="114"/>
</dbReference>
<dbReference type="IntAct" id="Q9BQW3">
    <property type="interactions" value="1"/>
</dbReference>
<dbReference type="STRING" id="9606.ENSP00000370022"/>
<dbReference type="GlyGen" id="Q9BQW3">
    <property type="glycosylation" value="2 sites, 1 O-linked glycan (1 site)"/>
</dbReference>
<dbReference type="iPTMnet" id="Q9BQW3"/>
<dbReference type="PhosphoSitePlus" id="Q9BQW3"/>
<dbReference type="BioMuta" id="EBF4"/>
<dbReference type="DMDM" id="152031576"/>
<dbReference type="jPOST" id="Q9BQW3"/>
<dbReference type="MassIVE" id="Q9BQW3"/>
<dbReference type="PaxDb" id="9606-ENSP00000370022"/>
<dbReference type="PeptideAtlas" id="Q9BQW3"/>
<dbReference type="ProteomicsDB" id="78725">
    <molecule id="Q9BQW3-2"/>
</dbReference>
<dbReference type="ProteomicsDB" id="78726">
    <molecule id="Q9BQW3-1"/>
</dbReference>
<dbReference type="TopDownProteomics" id="Q9BQW3-1">
    <molecule id="Q9BQW3-1"/>
</dbReference>
<dbReference type="Antibodypedia" id="23277">
    <property type="antibodies" value="85 antibodies from 17 providers"/>
</dbReference>
<dbReference type="DNASU" id="57593"/>
<dbReference type="Ensembl" id="ENST00000609451.6">
    <molecule id="Q9BQW3-2"/>
    <property type="protein sequence ID" value="ENSP00000477023.1"/>
    <property type="gene ID" value="ENSG00000088881.22"/>
</dbReference>
<dbReference type="GeneID" id="57593"/>
<dbReference type="KEGG" id="hsa:57593"/>
<dbReference type="MANE-Select" id="ENST00000609451.6">
    <property type="protein sequence ID" value="ENSP00000477023.1"/>
    <property type="RefSeq nucleotide sequence ID" value="NM_001395167.1"/>
    <property type="RefSeq protein sequence ID" value="NP_001382096.1"/>
</dbReference>
<dbReference type="UCSC" id="uc061vby.1">
    <molecule id="Q9BQW3-2"/>
    <property type="organism name" value="human"/>
</dbReference>
<dbReference type="AGR" id="HGNC:29278"/>
<dbReference type="CTD" id="57593"/>
<dbReference type="DisGeNET" id="57593"/>
<dbReference type="GeneCards" id="EBF4"/>
<dbReference type="HGNC" id="HGNC:29278">
    <property type="gene designation" value="EBF4"/>
</dbReference>
<dbReference type="HPA" id="ENSG00000088881">
    <property type="expression patterns" value="Low tissue specificity"/>
</dbReference>
<dbReference type="MIM" id="609935">
    <property type="type" value="gene"/>
</dbReference>
<dbReference type="neXtProt" id="NX_Q9BQW3"/>
<dbReference type="OpenTargets" id="ENSG00000088881"/>
<dbReference type="PharmGKB" id="PA162384262"/>
<dbReference type="VEuPathDB" id="HostDB:ENSG00000088881"/>
<dbReference type="eggNOG" id="KOG3836">
    <property type="taxonomic scope" value="Eukaryota"/>
</dbReference>
<dbReference type="GeneTree" id="ENSGT00950000182859"/>
<dbReference type="InParanoid" id="Q9BQW3"/>
<dbReference type="OMA" id="GGVCWPG"/>
<dbReference type="OrthoDB" id="25246at2759"/>
<dbReference type="PAN-GO" id="Q9BQW3">
    <property type="GO annotations" value="3 GO annotations based on evolutionary models"/>
</dbReference>
<dbReference type="PhylomeDB" id="Q9BQW3"/>
<dbReference type="PathwayCommons" id="Q9BQW3"/>
<dbReference type="SignaLink" id="Q9BQW3"/>
<dbReference type="BioGRID-ORCS" id="57593">
    <property type="hits" value="20 hits in 1178 CRISPR screens"/>
</dbReference>
<dbReference type="ChiTaRS" id="EBF4">
    <property type="organism name" value="human"/>
</dbReference>
<dbReference type="GenomeRNAi" id="57593"/>
<dbReference type="Pharos" id="Q9BQW3">
    <property type="development level" value="Tbio"/>
</dbReference>
<dbReference type="PRO" id="PR:Q9BQW3"/>
<dbReference type="Proteomes" id="UP000005640">
    <property type="component" value="Chromosome 20"/>
</dbReference>
<dbReference type="RNAct" id="Q9BQW3">
    <property type="molecule type" value="protein"/>
</dbReference>
<dbReference type="Bgee" id="ENSG00000088881">
    <property type="expression patterns" value="Expressed in male germ line stem cell (sensu Vertebrata) in testis and 144 other cell types or tissues"/>
</dbReference>
<dbReference type="ExpressionAtlas" id="Q9BQW3">
    <property type="expression patterns" value="baseline and differential"/>
</dbReference>
<dbReference type="GO" id="GO:0000785">
    <property type="term" value="C:chromatin"/>
    <property type="evidence" value="ECO:0000314"/>
    <property type="project" value="UniProtKB"/>
</dbReference>
<dbReference type="GO" id="GO:0005634">
    <property type="term" value="C:nucleus"/>
    <property type="evidence" value="ECO:0007669"/>
    <property type="project" value="UniProtKB-SubCell"/>
</dbReference>
<dbReference type="GO" id="GO:0001228">
    <property type="term" value="F:DNA-binding transcription activator activity, RNA polymerase II-specific"/>
    <property type="evidence" value="ECO:0007669"/>
    <property type="project" value="Ensembl"/>
</dbReference>
<dbReference type="GO" id="GO:0000981">
    <property type="term" value="F:DNA-binding transcription factor activity, RNA polymerase II-specific"/>
    <property type="evidence" value="ECO:0000314"/>
    <property type="project" value="UniProtKB"/>
</dbReference>
<dbReference type="GO" id="GO:0140297">
    <property type="term" value="F:DNA-binding transcription factor binding"/>
    <property type="evidence" value="ECO:0000353"/>
    <property type="project" value="UniProtKB"/>
</dbReference>
<dbReference type="GO" id="GO:0000978">
    <property type="term" value="F:RNA polymerase II cis-regulatory region sequence-specific DNA binding"/>
    <property type="evidence" value="ECO:0000314"/>
    <property type="project" value="UniProtKB"/>
</dbReference>
<dbReference type="GO" id="GO:0008270">
    <property type="term" value="F:zinc ion binding"/>
    <property type="evidence" value="ECO:0007669"/>
    <property type="project" value="UniProtKB-KW"/>
</dbReference>
<dbReference type="GO" id="GO:0045944">
    <property type="term" value="P:positive regulation of transcription by RNA polymerase II"/>
    <property type="evidence" value="ECO:0000314"/>
    <property type="project" value="UniProtKB"/>
</dbReference>
<dbReference type="GO" id="GO:0006357">
    <property type="term" value="P:regulation of transcription by RNA polymerase II"/>
    <property type="evidence" value="ECO:0000318"/>
    <property type="project" value="GO_Central"/>
</dbReference>
<dbReference type="GO" id="GO:0070231">
    <property type="term" value="P:T cell apoptotic process"/>
    <property type="evidence" value="ECO:0000315"/>
    <property type="project" value="UniProtKB"/>
</dbReference>
<dbReference type="CDD" id="cd11606">
    <property type="entry name" value="COE_DBD"/>
    <property type="match status" value="1"/>
</dbReference>
<dbReference type="CDD" id="cd01175">
    <property type="entry name" value="IPT_COE"/>
    <property type="match status" value="1"/>
</dbReference>
<dbReference type="FunFam" id="1.10.287.4280:FF:000001">
    <property type="entry name" value="transcription factor COE1 isoform X2"/>
    <property type="match status" value="1"/>
</dbReference>
<dbReference type="FunFam" id="2.60.40.10:FF:000021">
    <property type="entry name" value="transcription factor COE1 isoform X2"/>
    <property type="match status" value="1"/>
</dbReference>
<dbReference type="FunFam" id="2.60.40.3180:FF:000001">
    <property type="entry name" value="transcription factor COE1 isoform X2"/>
    <property type="match status" value="1"/>
</dbReference>
<dbReference type="Gene3D" id="1.10.287.4280">
    <property type="match status" value="1"/>
</dbReference>
<dbReference type="Gene3D" id="2.60.40.10">
    <property type="entry name" value="Immunoglobulins"/>
    <property type="match status" value="1"/>
</dbReference>
<dbReference type="Gene3D" id="2.60.40.3180">
    <property type="entry name" value="Transcription factor COE1, DNA-binding domain"/>
    <property type="match status" value="1"/>
</dbReference>
<dbReference type="InterPro" id="IPR032200">
    <property type="entry name" value="COE_DBD"/>
</dbReference>
<dbReference type="InterPro" id="IPR038173">
    <property type="entry name" value="COE_DBD_sf"/>
</dbReference>
<dbReference type="InterPro" id="IPR032201">
    <property type="entry name" value="COE_HLH"/>
</dbReference>
<dbReference type="InterPro" id="IPR038006">
    <property type="entry name" value="COE_IPT"/>
</dbReference>
<dbReference type="InterPro" id="IPR013783">
    <property type="entry name" value="Ig-like_fold"/>
</dbReference>
<dbReference type="InterPro" id="IPR014756">
    <property type="entry name" value="Ig_E-set"/>
</dbReference>
<dbReference type="InterPro" id="IPR002909">
    <property type="entry name" value="IPT_dom"/>
</dbReference>
<dbReference type="InterPro" id="IPR003523">
    <property type="entry name" value="Transcription_factor_COE"/>
</dbReference>
<dbReference type="InterPro" id="IPR018350">
    <property type="entry name" value="Transcription_factor_COE_CS"/>
</dbReference>
<dbReference type="PANTHER" id="PTHR10747">
    <property type="entry name" value="TRANSCRIPTION FACTOR COE FAMILY MEMBER"/>
    <property type="match status" value="1"/>
</dbReference>
<dbReference type="Pfam" id="PF16422">
    <property type="entry name" value="COE1_DBD"/>
    <property type="match status" value="1"/>
</dbReference>
<dbReference type="Pfam" id="PF16423">
    <property type="entry name" value="COE1_HLH"/>
    <property type="match status" value="1"/>
</dbReference>
<dbReference type="Pfam" id="PF01833">
    <property type="entry name" value="TIG"/>
    <property type="match status" value="1"/>
</dbReference>
<dbReference type="SMART" id="SM00429">
    <property type="entry name" value="IPT"/>
    <property type="match status" value="1"/>
</dbReference>
<dbReference type="SUPFAM" id="SSF81296">
    <property type="entry name" value="E set domains"/>
    <property type="match status" value="1"/>
</dbReference>
<dbReference type="PROSITE" id="PS01345">
    <property type="entry name" value="COE"/>
    <property type="match status" value="1"/>
</dbReference>
<reference key="1">
    <citation type="journal article" date="2001" name="Nature">
        <title>The DNA sequence and comparative analysis of human chromosome 20.</title>
        <authorList>
            <person name="Deloukas P."/>
            <person name="Matthews L.H."/>
            <person name="Ashurst J.L."/>
            <person name="Burton J."/>
            <person name="Gilbert J.G.R."/>
            <person name="Jones M."/>
            <person name="Stavrides G."/>
            <person name="Almeida J.P."/>
            <person name="Babbage A.K."/>
            <person name="Bagguley C.L."/>
            <person name="Bailey J."/>
            <person name="Barlow K.F."/>
            <person name="Bates K.N."/>
            <person name="Beard L.M."/>
            <person name="Beare D.M."/>
            <person name="Beasley O.P."/>
            <person name="Bird C.P."/>
            <person name="Blakey S.E."/>
            <person name="Bridgeman A.M."/>
            <person name="Brown A.J."/>
            <person name="Buck D."/>
            <person name="Burrill W.D."/>
            <person name="Butler A.P."/>
            <person name="Carder C."/>
            <person name="Carter N.P."/>
            <person name="Chapman J.C."/>
            <person name="Clamp M."/>
            <person name="Clark G."/>
            <person name="Clark L.N."/>
            <person name="Clark S.Y."/>
            <person name="Clee C.M."/>
            <person name="Clegg S."/>
            <person name="Cobley V.E."/>
            <person name="Collier R.E."/>
            <person name="Connor R.E."/>
            <person name="Corby N.R."/>
            <person name="Coulson A."/>
            <person name="Coville G.J."/>
            <person name="Deadman R."/>
            <person name="Dhami P.D."/>
            <person name="Dunn M."/>
            <person name="Ellington A.G."/>
            <person name="Frankland J.A."/>
            <person name="Fraser A."/>
            <person name="French L."/>
            <person name="Garner P."/>
            <person name="Grafham D.V."/>
            <person name="Griffiths C."/>
            <person name="Griffiths M.N.D."/>
            <person name="Gwilliam R."/>
            <person name="Hall R.E."/>
            <person name="Hammond S."/>
            <person name="Harley J.L."/>
            <person name="Heath P.D."/>
            <person name="Ho S."/>
            <person name="Holden J.L."/>
            <person name="Howden P.J."/>
            <person name="Huckle E."/>
            <person name="Hunt A.R."/>
            <person name="Hunt S.E."/>
            <person name="Jekosch K."/>
            <person name="Johnson C.M."/>
            <person name="Johnson D."/>
            <person name="Kay M.P."/>
            <person name="Kimberley A.M."/>
            <person name="King A."/>
            <person name="Knights A."/>
            <person name="Laird G.K."/>
            <person name="Lawlor S."/>
            <person name="Lehvaeslaiho M.H."/>
            <person name="Leversha M.A."/>
            <person name="Lloyd C."/>
            <person name="Lloyd D.M."/>
            <person name="Lovell J.D."/>
            <person name="Marsh V.L."/>
            <person name="Martin S.L."/>
            <person name="McConnachie L.J."/>
            <person name="McLay K."/>
            <person name="McMurray A.A."/>
            <person name="Milne S.A."/>
            <person name="Mistry D."/>
            <person name="Moore M.J.F."/>
            <person name="Mullikin J.C."/>
            <person name="Nickerson T."/>
            <person name="Oliver K."/>
            <person name="Parker A."/>
            <person name="Patel R."/>
            <person name="Pearce T.A.V."/>
            <person name="Peck A.I."/>
            <person name="Phillimore B.J.C.T."/>
            <person name="Prathalingam S.R."/>
            <person name="Plumb R.W."/>
            <person name="Ramsay H."/>
            <person name="Rice C.M."/>
            <person name="Ross M.T."/>
            <person name="Scott C.E."/>
            <person name="Sehra H.K."/>
            <person name="Shownkeen R."/>
            <person name="Sims S."/>
            <person name="Skuce C.D."/>
            <person name="Smith M.L."/>
            <person name="Soderlund C."/>
            <person name="Steward C.A."/>
            <person name="Sulston J.E."/>
            <person name="Swann R.M."/>
            <person name="Sycamore N."/>
            <person name="Taylor R."/>
            <person name="Tee L."/>
            <person name="Thomas D.W."/>
            <person name="Thorpe A."/>
            <person name="Tracey A."/>
            <person name="Tromans A.C."/>
            <person name="Vaudin M."/>
            <person name="Wall M."/>
            <person name="Wallis J.M."/>
            <person name="Whitehead S.L."/>
            <person name="Whittaker P."/>
            <person name="Willey D.L."/>
            <person name="Williams L."/>
            <person name="Williams S.A."/>
            <person name="Wilming L."/>
            <person name="Wray P.W."/>
            <person name="Hubbard T."/>
            <person name="Durbin R.M."/>
            <person name="Bentley D.R."/>
            <person name="Beck S."/>
            <person name="Rogers J."/>
        </authorList>
    </citation>
    <scope>NUCLEOTIDE SEQUENCE [LARGE SCALE GENOMIC DNA]</scope>
</reference>
<reference key="2">
    <citation type="journal article" date="2000" name="DNA Res.">
        <title>Prediction of the coding sequences of unidentified human genes. XVI. The complete sequences of 150 new cDNA clones from brain which code for large proteins in vitro.</title>
        <authorList>
            <person name="Nagase T."/>
            <person name="Kikuno R."/>
            <person name="Ishikawa K."/>
            <person name="Hirosawa M."/>
            <person name="Ohara O."/>
        </authorList>
    </citation>
    <scope>NUCLEOTIDE SEQUENCE [LARGE SCALE MRNA] OF 16-602 (ISOFORM 1)</scope>
    <source>
        <tissue>Brain</tissue>
    </source>
</reference>
<reference key="3">
    <citation type="journal article" date="2022" name="Proc. Natl. Acad. Sci. U.S.A.">
        <title>Early B cell factor 4 modulates FAS-mediated apoptosis and promotes cytotoxic function in human immune cells.</title>
        <authorList>
            <person name="Kubo S."/>
            <person name="Kataria R."/>
            <person name="Yao Y."/>
            <person name="Gabrielski J.Q."/>
            <person name="Zheng L."/>
            <person name="Markowitz T.E."/>
            <person name="Chan W."/>
            <person name="Song J."/>
            <person name="Boddapati A.K."/>
            <person name="Saeki K."/>
            <person name="Haeupl B."/>
            <person name="Park A.Y."/>
            <person name="Cheng Y.H."/>
            <person name="Cui J."/>
            <person name="Oellerich T."/>
            <person name="Lenardo M.J."/>
        </authorList>
    </citation>
    <scope>FUNCTION</scope>
    <scope>INTERACTION WITH MAPK3 AND STAT5</scope>
    <scope>SUBCELLULAR LOCATION</scope>
    <scope>TISSUE SPECIFICITY</scope>
</reference>
<gene>
    <name type="primary">EBF4</name>
    <name type="synonym">COE4</name>
    <name type="synonym">KIAA1442</name>
</gene>
<comment type="function">
    <text evidence="5">Transcription factor (PubMed:35939714). Binds to specific sequence motif 5'-CCCNNG[GA]G-3' in regulatory elements of putative target immunoregulatory genes such as NKG7, GZMA, and TBX21 (PubMed:35939714). Positively modulates transcription of NKG7 (PubMed:35939714). May play a role in regulating FAS/CD95-mediated apoptosis in cytotoxic NK cells and T-cells, probably downstream of interleukin IL2 signaling (PubMed:35939714).</text>
</comment>
<comment type="subunit">
    <text evidence="2 5">Forms either a homodimer or a heterodimer with a related family member (By similarity). Interacts with MAPK3/ERK1 (PubMed:35939714). Interacts with STAT5A (PubMed:35939714).</text>
</comment>
<comment type="subcellular location">
    <subcellularLocation>
        <location evidence="8">Nucleus</location>
    </subcellularLocation>
</comment>
<comment type="alternative products">
    <event type="alternative splicing"/>
    <isoform>
        <id>Q9BQW3-2</id>
        <name>2</name>
        <sequence type="displayed"/>
    </isoform>
    <isoform>
        <id>Q9BQW3-1</id>
        <name>1</name>
        <sequence type="described" ref="VSP_026469 VSP_026470"/>
    </isoform>
</comment>
<comment type="tissue specificity">
    <text evidence="5">Most highly expressed in cytotoxic NK cells, especially CD16(+) NK cells, followed by CD8(+) T-cells.</text>
</comment>
<comment type="induction">
    <text evidence="5">In CD8(+) T-cells mRNA levels are down-regulated following T-cell receptor (TCR) stimulation (PubMed:35939714). In NK cells mRNA levels are down-regulated following KLRK1/NKG2D receptor stimulation (PubMed:35939714).</text>
</comment>
<comment type="similarity">
    <text evidence="7">Belongs to the COE family.</text>
</comment>
<comment type="caution">
    <text evidence="5">EBF4 expression was not detected in mouse NK cells and CD8(+) T-cells and there were no differences in the NK, CD8(+), and CD4(+) precursor and mature cell subsets in the thymus, spleen, or liver from a mouse EBF4 knockout (PubMed:35939714). It has been suggested, therefore, that the functions of EBF4 differ between humans and mice (PubMed:35939714).</text>
</comment>
<protein>
    <recommendedName>
        <fullName>Transcription factor COE4</fullName>
    </recommendedName>
    <alternativeName>
        <fullName>Early B-cell factor 4</fullName>
        <shortName>EBF-4</shortName>
    </alternativeName>
    <alternativeName>
        <fullName>Olf-1/EBF-like 4</fullName>
        <shortName>O/E-4</shortName>
        <shortName>OE-4</shortName>
    </alternativeName>
</protein>
<keyword id="KW-0010">Activator</keyword>
<keyword id="KW-0025">Alternative splicing</keyword>
<keyword id="KW-0217">Developmental protein</keyword>
<keyword id="KW-0238">DNA-binding</keyword>
<keyword id="KW-0479">Metal-binding</keyword>
<keyword id="KW-0539">Nucleus</keyword>
<keyword id="KW-1267">Proteomics identification</keyword>
<keyword id="KW-1185">Reference proteome</keyword>
<keyword id="KW-0804">Transcription</keyword>
<keyword id="KW-0805">Transcription regulation</keyword>
<keyword id="KW-0862">Zinc</keyword>
<keyword id="KW-0863">Zinc-finger</keyword>
<name>COE4_HUMAN</name>
<evidence type="ECO:0000250" key="1"/>
<evidence type="ECO:0000250" key="2">
    <source>
        <dbReference type="UniProtKB" id="Q8K4J2"/>
    </source>
</evidence>
<evidence type="ECO:0000255" key="3"/>
<evidence type="ECO:0000256" key="4">
    <source>
        <dbReference type="SAM" id="MobiDB-lite"/>
    </source>
</evidence>
<evidence type="ECO:0000269" key="5">
    <source>
    </source>
</evidence>
<evidence type="ECO:0000303" key="6">
    <source>
    </source>
</evidence>
<evidence type="ECO:0000305" key="7"/>
<evidence type="ECO:0000305" key="8">
    <source>
    </source>
</evidence>
<feature type="chain" id="PRO_0000107835" description="Transcription factor COE4">
    <location>
        <begin position="1"/>
        <end position="602"/>
    </location>
</feature>
<feature type="domain" description="IPT/TIG">
    <location>
        <begin position="256"/>
        <end position="338"/>
    </location>
</feature>
<feature type="zinc finger region" description="C5-type" evidence="3">
    <location>
        <begin position="152"/>
        <end position="171"/>
    </location>
</feature>
<feature type="region of interest" description="Interaction with DNA" evidence="1">
    <location>
        <begin position="64"/>
        <end position="67"/>
    </location>
</feature>
<feature type="region of interest" description="Interaction with DNA" evidence="1">
    <location>
        <begin position="198"/>
        <end position="205"/>
    </location>
</feature>
<feature type="region of interest" description="Interaction with DNA" evidence="1">
    <location>
        <begin position="237"/>
        <end position="240"/>
    </location>
</feature>
<feature type="region of interest" description="Disordered" evidence="4">
    <location>
        <begin position="448"/>
        <end position="476"/>
    </location>
</feature>
<feature type="region of interest" description="Disordered" evidence="4">
    <location>
        <begin position="558"/>
        <end position="602"/>
    </location>
</feature>
<feature type="compositionally biased region" description="Pro residues" evidence="4">
    <location>
        <begin position="560"/>
        <end position="569"/>
    </location>
</feature>
<feature type="site" description="Interaction with DNA" evidence="1">
    <location>
        <position position="164"/>
    </location>
</feature>
<feature type="site" description="Interaction with DNA" evidence="1">
    <location>
        <position position="173"/>
    </location>
</feature>
<feature type="splice variant" id="VSP_026469" description="In isoform 1." evidence="6">
    <original>MFPAQ</original>
    <variation>MARARGQAPGSGGRRRPRRGGAGTGPRGESAGLLLLLLQVLPPGATAGPGRRGTRGAGGGGVCWPGAAPAFPRDARLLLLLPPLPPLSPPPPSSAPAASASRM</variation>
    <location>
        <begin position="1"/>
        <end position="5"/>
    </location>
</feature>
<feature type="splice variant" id="VSP_026470" description="In isoform 1." evidence="6">
    <original>IMPSSPPLAAASSMSLPAAAPTTSVFSFSPVNMISAVKQRSAFAPVLRPPSSPPQACPRAHGEGLPDQSFEDSDKFHSPARGLQGLAYS</original>
    <variation>KERLRPRAAPPKLPTPGLPQSPRRGASRPVF</variation>
    <location>
        <begin position="514"/>
        <end position="602"/>
    </location>
</feature>
<feature type="sequence conflict" description="In Ref. 2; BAA92680." evidence="7" ref="2">
    <original>P</original>
    <variation>S</variation>
    <location>
        <position position="425"/>
    </location>
</feature>
<sequence length="602" mass="64473">MFPAQDALPRSGLNLKEEPLLPAGLGSVRSWMQGAGILDASTAAQSGVGLARAHFEKQPPSNLRKSNFFHFVLAMYDRQGQPVEVERTAFIDFVEKDREPGAEKTNNGIHYRLRLVYNNGLRTEQDLYVRLIDSMSKQAIIYEGQDKNPEMCRVLLTHEIMCSRCCDRKSCGNRNETPSDPVIIDRFFLKFFLKCNQNCLKNAGNPRDMRRFQVVVSTTVSVDGHVLAVSDNMFVHNNSKHGRRARRLDPSEAATPCIKAISPGEGWTTGGATVIVIGDNFFDGLQVVFGNVLVWSELITPHAIRVQTPPRHIPGVVEVTLSYKSKQFCKGCPGRFVYTALNEPTIDYGFQRLQKVIPRHPGDPERLPKEVLLKRAADLAEALYGVPGSNQELLLKRAADVAEALYSTPRAPGPLAPLAPSHPHPAVVGINAFSSPLAIAVGDATPGPEPGYARSCSSASPRGFAPSPGSQQSGYGGGLGAGLGGYGAPGVAGLGVPGSPSFLNGSTATSPFAIMPSSPPLAAASSMSLPAAAPTTSVFSFSPVNMISAVKQRSAFAPVLRPPSSPPQACPRAHGEGLPDQSFEDSDKFHSPARGLQGLAYS</sequence>
<accession>Q9BQW3</accession>
<accession>Q1MTP7</accession>
<accession>Q5JY53</accession>
<accession>Q9NUB6</accession>
<accession>Q9P2A6</accession>
<organism>
    <name type="scientific">Homo sapiens</name>
    <name type="common">Human</name>
    <dbReference type="NCBI Taxonomy" id="9606"/>
    <lineage>
        <taxon>Eukaryota</taxon>
        <taxon>Metazoa</taxon>
        <taxon>Chordata</taxon>
        <taxon>Craniata</taxon>
        <taxon>Vertebrata</taxon>
        <taxon>Euteleostomi</taxon>
        <taxon>Mammalia</taxon>
        <taxon>Eutheria</taxon>
        <taxon>Euarchontoglires</taxon>
        <taxon>Primates</taxon>
        <taxon>Haplorrhini</taxon>
        <taxon>Catarrhini</taxon>
        <taxon>Hominidae</taxon>
        <taxon>Homo</taxon>
    </lineage>
</organism>